<protein>
    <recommendedName>
        <fullName evidence="1">Probable serine hydroxymethyltransferase</fullName>
        <shortName evidence="1">SHMT</shortName>
        <shortName evidence="1">Serine methylase</shortName>
        <ecNumber evidence="1">2.1.2.1</ecNumber>
    </recommendedName>
</protein>
<gene>
    <name evidence="1" type="primary">glyA</name>
    <name type="ordered locus">RBE_1308</name>
</gene>
<accession>Q1RGX5</accession>
<reference key="1">
    <citation type="journal article" date="2006" name="PLoS Genet.">
        <title>Genome sequence of Rickettsia bellii illuminates the role of amoebae in gene exchanges between intracellular pathogens.</title>
        <authorList>
            <person name="Ogata H."/>
            <person name="La Scola B."/>
            <person name="Audic S."/>
            <person name="Renesto P."/>
            <person name="Blanc G."/>
            <person name="Robert C."/>
            <person name="Fournier P.-E."/>
            <person name="Claverie J.-M."/>
            <person name="Raoult D."/>
        </authorList>
    </citation>
    <scope>NUCLEOTIDE SEQUENCE [LARGE SCALE GENOMIC DNA]</scope>
    <source>
        <strain>RML369-C</strain>
    </source>
</reference>
<organism>
    <name type="scientific">Rickettsia bellii (strain RML369-C)</name>
    <dbReference type="NCBI Taxonomy" id="336407"/>
    <lineage>
        <taxon>Bacteria</taxon>
        <taxon>Pseudomonadati</taxon>
        <taxon>Pseudomonadota</taxon>
        <taxon>Alphaproteobacteria</taxon>
        <taxon>Rickettsiales</taxon>
        <taxon>Rickettsiaceae</taxon>
        <taxon>Rickettsieae</taxon>
        <taxon>Rickettsia</taxon>
        <taxon>belli group</taxon>
    </lineage>
</organism>
<dbReference type="EC" id="2.1.2.1" evidence="1"/>
<dbReference type="EMBL" id="CP000087">
    <property type="protein sequence ID" value="ABE05389.1"/>
    <property type="molecule type" value="Genomic_DNA"/>
</dbReference>
<dbReference type="RefSeq" id="WP_011477959.1">
    <property type="nucleotide sequence ID" value="NC_007940.1"/>
</dbReference>
<dbReference type="SMR" id="Q1RGX5"/>
<dbReference type="KEGG" id="rbe:RBE_1308"/>
<dbReference type="eggNOG" id="COG0112">
    <property type="taxonomic scope" value="Bacteria"/>
</dbReference>
<dbReference type="HOGENOM" id="CLU_022477_2_1_5"/>
<dbReference type="OrthoDB" id="9803846at2"/>
<dbReference type="UniPathway" id="UPA00193"/>
<dbReference type="Proteomes" id="UP000001951">
    <property type="component" value="Chromosome"/>
</dbReference>
<dbReference type="GO" id="GO:0005829">
    <property type="term" value="C:cytosol"/>
    <property type="evidence" value="ECO:0007669"/>
    <property type="project" value="TreeGrafter"/>
</dbReference>
<dbReference type="GO" id="GO:0004372">
    <property type="term" value="F:glycine hydroxymethyltransferase activity"/>
    <property type="evidence" value="ECO:0007669"/>
    <property type="project" value="UniProtKB-EC"/>
</dbReference>
<dbReference type="GO" id="GO:0030170">
    <property type="term" value="F:pyridoxal phosphate binding"/>
    <property type="evidence" value="ECO:0007669"/>
    <property type="project" value="UniProtKB-UniRule"/>
</dbReference>
<dbReference type="GO" id="GO:0019264">
    <property type="term" value="P:glycine biosynthetic process from serine"/>
    <property type="evidence" value="ECO:0007669"/>
    <property type="project" value="InterPro"/>
</dbReference>
<dbReference type="GO" id="GO:0035999">
    <property type="term" value="P:tetrahydrofolate interconversion"/>
    <property type="evidence" value="ECO:0007669"/>
    <property type="project" value="UniProtKB-UniRule"/>
</dbReference>
<dbReference type="CDD" id="cd00378">
    <property type="entry name" value="SHMT"/>
    <property type="match status" value="1"/>
</dbReference>
<dbReference type="FunFam" id="3.40.640.10:FF:000001">
    <property type="entry name" value="Serine hydroxymethyltransferase"/>
    <property type="match status" value="1"/>
</dbReference>
<dbReference type="Gene3D" id="3.90.1150.10">
    <property type="entry name" value="Aspartate Aminotransferase, domain 1"/>
    <property type="match status" value="1"/>
</dbReference>
<dbReference type="Gene3D" id="3.40.640.10">
    <property type="entry name" value="Type I PLP-dependent aspartate aminotransferase-like (Major domain)"/>
    <property type="match status" value="1"/>
</dbReference>
<dbReference type="HAMAP" id="MF_00051">
    <property type="entry name" value="SHMT"/>
    <property type="match status" value="1"/>
</dbReference>
<dbReference type="InterPro" id="IPR015424">
    <property type="entry name" value="PyrdxlP-dep_Trfase"/>
</dbReference>
<dbReference type="InterPro" id="IPR015421">
    <property type="entry name" value="PyrdxlP-dep_Trfase_major"/>
</dbReference>
<dbReference type="InterPro" id="IPR015422">
    <property type="entry name" value="PyrdxlP-dep_Trfase_small"/>
</dbReference>
<dbReference type="InterPro" id="IPR001085">
    <property type="entry name" value="Ser_HO-MeTrfase"/>
</dbReference>
<dbReference type="InterPro" id="IPR049943">
    <property type="entry name" value="Ser_HO-MeTrfase-like"/>
</dbReference>
<dbReference type="InterPro" id="IPR039429">
    <property type="entry name" value="SHMT-like_dom"/>
</dbReference>
<dbReference type="NCBIfam" id="NF000586">
    <property type="entry name" value="PRK00011.1"/>
    <property type="match status" value="1"/>
</dbReference>
<dbReference type="PANTHER" id="PTHR11680">
    <property type="entry name" value="SERINE HYDROXYMETHYLTRANSFERASE"/>
    <property type="match status" value="1"/>
</dbReference>
<dbReference type="PANTHER" id="PTHR11680:SF35">
    <property type="entry name" value="SERINE HYDROXYMETHYLTRANSFERASE 1"/>
    <property type="match status" value="1"/>
</dbReference>
<dbReference type="Pfam" id="PF00464">
    <property type="entry name" value="SHMT"/>
    <property type="match status" value="1"/>
</dbReference>
<dbReference type="PIRSF" id="PIRSF000412">
    <property type="entry name" value="SHMT"/>
    <property type="match status" value="1"/>
</dbReference>
<dbReference type="SUPFAM" id="SSF53383">
    <property type="entry name" value="PLP-dependent transferases"/>
    <property type="match status" value="1"/>
</dbReference>
<proteinExistence type="inferred from homology"/>
<evidence type="ECO:0000255" key="1">
    <source>
        <dbReference type="HAMAP-Rule" id="MF_00051"/>
    </source>
</evidence>
<sequence length="420" mass="45839">MNIFNNKLQEIDKGIFEIIKHEKTRQNSVIELIASENFVSPAVLEAQGSVLTNKYAEGYSGKRFYNGCEEVDKAENLAIERAKKLFNCKYANVQPHSGSQANQAVYLALMQPGDTVLGMSLDSGGHLTHGSTANMSGKWFNAVSYSVDKETYLIDYDEVERLAILHKPKLLIAGFSAYPRNLDFAKFREIADKVGAYLMADIAHIAGLVAAGEHQSPIPHAHIVTSTTNKTLRGPRGGLILSNDEEIGKKINSALFPGLQGGPLMHIIAAKAVAFLESLQPEYKSYIKQVIINAKALAGSLQERGYDILTGGTDNHIVLVDLRKDGITGKIAANSLDRAGITCNKNAIPFDKTSPFITSGIRLGTPACTTRGFKEKDFVLVGHLIADILDGLKNSEDNSKAEQKVLSEVTKLIKLFPFYD</sequence>
<comment type="function">
    <text evidence="1">Catalyzes the reversible interconversion of serine and glycine with tetrahydrofolate (THF) serving as the one-carbon carrier. This reaction serves as the major source of one-carbon groups required for the biosynthesis of purines, thymidylate, methionine, and other important biomolecules.</text>
</comment>
<comment type="catalytic activity">
    <reaction evidence="1">
        <text>(6R)-5,10-methylene-5,6,7,8-tetrahydrofolate + glycine + H2O = (6S)-5,6,7,8-tetrahydrofolate + L-serine</text>
        <dbReference type="Rhea" id="RHEA:15481"/>
        <dbReference type="ChEBI" id="CHEBI:15377"/>
        <dbReference type="ChEBI" id="CHEBI:15636"/>
        <dbReference type="ChEBI" id="CHEBI:33384"/>
        <dbReference type="ChEBI" id="CHEBI:57305"/>
        <dbReference type="ChEBI" id="CHEBI:57453"/>
        <dbReference type="EC" id="2.1.2.1"/>
    </reaction>
</comment>
<comment type="cofactor">
    <cofactor evidence="1">
        <name>pyridoxal 5'-phosphate</name>
        <dbReference type="ChEBI" id="CHEBI:597326"/>
    </cofactor>
</comment>
<comment type="pathway">
    <text evidence="1">One-carbon metabolism; tetrahydrofolate interconversion.</text>
</comment>
<comment type="subunit">
    <text evidence="1">Homodimer.</text>
</comment>
<comment type="subcellular location">
    <subcellularLocation>
        <location evidence="1">Cytoplasm</location>
    </subcellularLocation>
</comment>
<comment type="similarity">
    <text evidence="1">Belongs to the SHMT family.</text>
</comment>
<feature type="chain" id="PRO_0000277914" description="Probable serine hydroxymethyltransferase">
    <location>
        <begin position="1"/>
        <end position="420"/>
    </location>
</feature>
<feature type="binding site" evidence="1">
    <location>
        <position position="121"/>
    </location>
    <ligand>
        <name>(6S)-5,6,7,8-tetrahydrofolate</name>
        <dbReference type="ChEBI" id="CHEBI:57453"/>
    </ligand>
</feature>
<feature type="binding site" evidence="1">
    <location>
        <begin position="125"/>
        <end position="127"/>
    </location>
    <ligand>
        <name>(6S)-5,6,7,8-tetrahydrofolate</name>
        <dbReference type="ChEBI" id="CHEBI:57453"/>
    </ligand>
</feature>
<feature type="binding site" evidence="1">
    <location>
        <position position="246"/>
    </location>
    <ligand>
        <name>(6S)-5,6,7,8-tetrahydrofolate</name>
        <dbReference type="ChEBI" id="CHEBI:57453"/>
    </ligand>
</feature>
<feature type="binding site" evidence="1">
    <location>
        <begin position="354"/>
        <end position="356"/>
    </location>
    <ligand>
        <name>(6S)-5,6,7,8-tetrahydrofolate</name>
        <dbReference type="ChEBI" id="CHEBI:57453"/>
    </ligand>
</feature>
<feature type="modified residue" description="N6-(pyridoxal phosphate)lysine" evidence="1">
    <location>
        <position position="230"/>
    </location>
</feature>
<name>GLYA_RICBR</name>
<keyword id="KW-0963">Cytoplasm</keyword>
<keyword id="KW-0554">One-carbon metabolism</keyword>
<keyword id="KW-0663">Pyridoxal phosphate</keyword>
<keyword id="KW-0808">Transferase</keyword>